<sequence length="300" mass="32683">MRSLVAQEKFRNIGLIARSESEQALYSLRQLIHFLHGRDCTVILDKHIIGHLPEMGLQAASASQMGEACDLVIVVGGDGSLLGAARTLARYKVPVLGVNRGHLGFLTDILPSEIESRVGQVLDGEYSTEKRFLLDLEVRRGRTVVGEGSALNDIVLLSGDSVHMIDFELMIDGHFVYGQRSDGLIVSTPTGSTAYALSGGGPIMHPKLDAMVLVPLNPHTLTSRPLVVAGDSEIKIHITTEKVRPLVSCDGTEGIRLQVDDVIAIRKKPHRLHLIHPPGHDFYQACRSKLGWSSRPGDNN</sequence>
<feature type="chain" id="PRO_1000079479" description="NAD kinase">
    <location>
        <begin position="1"/>
        <end position="300"/>
    </location>
</feature>
<feature type="active site" description="Proton acceptor" evidence="1">
    <location>
        <position position="78"/>
    </location>
</feature>
<feature type="binding site" evidence="1">
    <location>
        <begin position="78"/>
        <end position="79"/>
    </location>
    <ligand>
        <name>NAD(+)</name>
        <dbReference type="ChEBI" id="CHEBI:57540"/>
    </ligand>
</feature>
<feature type="binding site" evidence="1">
    <location>
        <begin position="152"/>
        <end position="153"/>
    </location>
    <ligand>
        <name>NAD(+)</name>
        <dbReference type="ChEBI" id="CHEBI:57540"/>
    </ligand>
</feature>
<feature type="binding site" evidence="1">
    <location>
        <position position="163"/>
    </location>
    <ligand>
        <name>NAD(+)</name>
        <dbReference type="ChEBI" id="CHEBI:57540"/>
    </ligand>
</feature>
<feature type="binding site" evidence="1">
    <location>
        <position position="180"/>
    </location>
    <ligand>
        <name>NAD(+)</name>
        <dbReference type="ChEBI" id="CHEBI:57540"/>
    </ligand>
</feature>
<feature type="binding site" evidence="1">
    <location>
        <position position="182"/>
    </location>
    <ligand>
        <name>NAD(+)</name>
        <dbReference type="ChEBI" id="CHEBI:57540"/>
    </ligand>
</feature>
<feature type="binding site" evidence="1">
    <location>
        <begin position="193"/>
        <end position="198"/>
    </location>
    <ligand>
        <name>NAD(+)</name>
        <dbReference type="ChEBI" id="CHEBI:57540"/>
    </ligand>
</feature>
<organism>
    <name type="scientific">Alcanivorax borkumensis (strain ATCC 700651 / DSM 11573 / NCIMB 13689 / SK2)</name>
    <dbReference type="NCBI Taxonomy" id="393595"/>
    <lineage>
        <taxon>Bacteria</taxon>
        <taxon>Pseudomonadati</taxon>
        <taxon>Pseudomonadota</taxon>
        <taxon>Gammaproteobacteria</taxon>
        <taxon>Oceanospirillales</taxon>
        <taxon>Alcanivoracaceae</taxon>
        <taxon>Alcanivorax</taxon>
    </lineage>
</organism>
<evidence type="ECO:0000255" key="1">
    <source>
        <dbReference type="HAMAP-Rule" id="MF_00361"/>
    </source>
</evidence>
<accession>Q0VQV5</accession>
<reference key="1">
    <citation type="journal article" date="2006" name="Nat. Biotechnol.">
        <title>Genome sequence of the ubiquitous hydrocarbon-degrading marine bacterium Alcanivorax borkumensis.</title>
        <authorList>
            <person name="Schneiker S."/>
            <person name="Martins dos Santos V.A.P."/>
            <person name="Bartels D."/>
            <person name="Bekel T."/>
            <person name="Brecht M."/>
            <person name="Buhrmester J."/>
            <person name="Chernikova T.N."/>
            <person name="Denaro R."/>
            <person name="Ferrer M."/>
            <person name="Gertler C."/>
            <person name="Goesmann A."/>
            <person name="Golyshina O.V."/>
            <person name="Kaminski F."/>
            <person name="Khachane A.N."/>
            <person name="Lang S."/>
            <person name="Linke B."/>
            <person name="McHardy A.C."/>
            <person name="Meyer F."/>
            <person name="Nechitaylo T."/>
            <person name="Puehler A."/>
            <person name="Regenhardt D."/>
            <person name="Rupp O."/>
            <person name="Sabirova J.S."/>
            <person name="Selbitschka W."/>
            <person name="Yakimov M.M."/>
            <person name="Timmis K.N."/>
            <person name="Vorhoelter F.-J."/>
            <person name="Weidner S."/>
            <person name="Kaiser O."/>
            <person name="Golyshin P.N."/>
        </authorList>
    </citation>
    <scope>NUCLEOTIDE SEQUENCE [LARGE SCALE GENOMIC DNA]</scope>
    <source>
        <strain>ATCC 700651 / DSM 11573 / NCIMB 13689 / SK2</strain>
    </source>
</reference>
<name>NADK_ALCBS</name>
<protein>
    <recommendedName>
        <fullName evidence="1">NAD kinase</fullName>
        <ecNumber evidence="1">2.7.1.23</ecNumber>
    </recommendedName>
    <alternativeName>
        <fullName evidence="1">ATP-dependent NAD kinase</fullName>
    </alternativeName>
</protein>
<dbReference type="EC" id="2.7.1.23" evidence="1"/>
<dbReference type="EMBL" id="AM286690">
    <property type="protein sequence ID" value="CAL16443.1"/>
    <property type="molecule type" value="Genomic_DNA"/>
</dbReference>
<dbReference type="RefSeq" id="WP_011588279.1">
    <property type="nucleotide sequence ID" value="NC_008260.1"/>
</dbReference>
<dbReference type="SMR" id="Q0VQV5"/>
<dbReference type="STRING" id="393595.ABO_0995"/>
<dbReference type="KEGG" id="abo:ABO_0995"/>
<dbReference type="eggNOG" id="COG0061">
    <property type="taxonomic scope" value="Bacteria"/>
</dbReference>
<dbReference type="HOGENOM" id="CLU_008831_0_1_6"/>
<dbReference type="OrthoDB" id="9774737at2"/>
<dbReference type="Proteomes" id="UP000008871">
    <property type="component" value="Chromosome"/>
</dbReference>
<dbReference type="GO" id="GO:0005737">
    <property type="term" value="C:cytoplasm"/>
    <property type="evidence" value="ECO:0007669"/>
    <property type="project" value="UniProtKB-SubCell"/>
</dbReference>
<dbReference type="GO" id="GO:0005524">
    <property type="term" value="F:ATP binding"/>
    <property type="evidence" value="ECO:0007669"/>
    <property type="project" value="UniProtKB-KW"/>
</dbReference>
<dbReference type="GO" id="GO:0046872">
    <property type="term" value="F:metal ion binding"/>
    <property type="evidence" value="ECO:0007669"/>
    <property type="project" value="UniProtKB-UniRule"/>
</dbReference>
<dbReference type="GO" id="GO:0051287">
    <property type="term" value="F:NAD binding"/>
    <property type="evidence" value="ECO:0007669"/>
    <property type="project" value="UniProtKB-ARBA"/>
</dbReference>
<dbReference type="GO" id="GO:0003951">
    <property type="term" value="F:NAD+ kinase activity"/>
    <property type="evidence" value="ECO:0007669"/>
    <property type="project" value="UniProtKB-UniRule"/>
</dbReference>
<dbReference type="GO" id="GO:0019674">
    <property type="term" value="P:NAD metabolic process"/>
    <property type="evidence" value="ECO:0007669"/>
    <property type="project" value="InterPro"/>
</dbReference>
<dbReference type="GO" id="GO:0006741">
    <property type="term" value="P:NADP biosynthetic process"/>
    <property type="evidence" value="ECO:0007669"/>
    <property type="project" value="UniProtKB-UniRule"/>
</dbReference>
<dbReference type="Gene3D" id="3.40.50.10330">
    <property type="entry name" value="Probable inorganic polyphosphate/atp-NAD kinase, domain 1"/>
    <property type="match status" value="1"/>
</dbReference>
<dbReference type="Gene3D" id="2.60.200.30">
    <property type="entry name" value="Probable inorganic polyphosphate/atp-NAD kinase, domain 2"/>
    <property type="match status" value="1"/>
</dbReference>
<dbReference type="HAMAP" id="MF_00361">
    <property type="entry name" value="NAD_kinase"/>
    <property type="match status" value="1"/>
</dbReference>
<dbReference type="InterPro" id="IPR017438">
    <property type="entry name" value="ATP-NAD_kinase_N"/>
</dbReference>
<dbReference type="InterPro" id="IPR017437">
    <property type="entry name" value="ATP-NAD_kinase_PpnK-typ_C"/>
</dbReference>
<dbReference type="InterPro" id="IPR016064">
    <property type="entry name" value="NAD/diacylglycerol_kinase_sf"/>
</dbReference>
<dbReference type="InterPro" id="IPR002504">
    <property type="entry name" value="NADK"/>
</dbReference>
<dbReference type="NCBIfam" id="NF002306">
    <property type="entry name" value="PRK01231.1"/>
    <property type="match status" value="1"/>
</dbReference>
<dbReference type="PANTHER" id="PTHR20275">
    <property type="entry name" value="NAD KINASE"/>
    <property type="match status" value="1"/>
</dbReference>
<dbReference type="PANTHER" id="PTHR20275:SF0">
    <property type="entry name" value="NAD KINASE"/>
    <property type="match status" value="1"/>
</dbReference>
<dbReference type="Pfam" id="PF01513">
    <property type="entry name" value="NAD_kinase"/>
    <property type="match status" value="1"/>
</dbReference>
<dbReference type="Pfam" id="PF20143">
    <property type="entry name" value="NAD_kinase_C"/>
    <property type="match status" value="1"/>
</dbReference>
<dbReference type="SUPFAM" id="SSF111331">
    <property type="entry name" value="NAD kinase/diacylglycerol kinase-like"/>
    <property type="match status" value="1"/>
</dbReference>
<keyword id="KW-0067">ATP-binding</keyword>
<keyword id="KW-0963">Cytoplasm</keyword>
<keyword id="KW-0418">Kinase</keyword>
<keyword id="KW-0520">NAD</keyword>
<keyword id="KW-0521">NADP</keyword>
<keyword id="KW-0547">Nucleotide-binding</keyword>
<keyword id="KW-1185">Reference proteome</keyword>
<keyword id="KW-0808">Transferase</keyword>
<comment type="function">
    <text evidence="1">Involved in the regulation of the intracellular balance of NAD and NADP, and is a key enzyme in the biosynthesis of NADP. Catalyzes specifically the phosphorylation on 2'-hydroxyl of the adenosine moiety of NAD to yield NADP.</text>
</comment>
<comment type="catalytic activity">
    <reaction evidence="1">
        <text>NAD(+) + ATP = ADP + NADP(+) + H(+)</text>
        <dbReference type="Rhea" id="RHEA:18629"/>
        <dbReference type="ChEBI" id="CHEBI:15378"/>
        <dbReference type="ChEBI" id="CHEBI:30616"/>
        <dbReference type="ChEBI" id="CHEBI:57540"/>
        <dbReference type="ChEBI" id="CHEBI:58349"/>
        <dbReference type="ChEBI" id="CHEBI:456216"/>
        <dbReference type="EC" id="2.7.1.23"/>
    </reaction>
</comment>
<comment type="cofactor">
    <cofactor evidence="1">
        <name>a divalent metal cation</name>
        <dbReference type="ChEBI" id="CHEBI:60240"/>
    </cofactor>
</comment>
<comment type="subcellular location">
    <subcellularLocation>
        <location evidence="1">Cytoplasm</location>
    </subcellularLocation>
</comment>
<comment type="similarity">
    <text evidence="1">Belongs to the NAD kinase family.</text>
</comment>
<gene>
    <name evidence="1" type="primary">nadK</name>
    <name type="ordered locus">ABO_0995</name>
</gene>
<proteinExistence type="inferred from homology"/>